<feature type="chain" id="PRO_0000390662" description="Protein wntless" evidence="4">
    <location>
        <begin position="1"/>
        <end position="562"/>
    </location>
</feature>
<feature type="topological domain" description="Cytoplasmic" evidence="2">
    <location>
        <begin position="1"/>
        <end position="13"/>
    </location>
</feature>
<feature type="transmembrane region" description="Helical; Name=1" evidence="4">
    <location>
        <begin position="14"/>
        <end position="34"/>
    </location>
</feature>
<feature type="topological domain" description="Lumenal" evidence="2">
    <location>
        <begin position="35"/>
        <end position="239"/>
    </location>
</feature>
<feature type="transmembrane region" description="Helical; Name=2" evidence="4">
    <location>
        <begin position="240"/>
        <end position="260"/>
    </location>
</feature>
<feature type="topological domain" description="Cytoplasmic" evidence="2">
    <location>
        <begin position="261"/>
        <end position="270"/>
    </location>
</feature>
<feature type="transmembrane region" description="Helical; Name=3" evidence="4">
    <location>
        <begin position="271"/>
        <end position="291"/>
    </location>
</feature>
<feature type="topological domain" description="Lumenal" evidence="2">
    <location>
        <begin position="292"/>
        <end position="311"/>
    </location>
</feature>
<feature type="transmembrane region" description="Helical; Name=4" evidence="4">
    <location>
        <begin position="312"/>
        <end position="332"/>
    </location>
</feature>
<feature type="topological domain" description="Cytoplasmic" evidence="2">
    <location>
        <begin position="333"/>
        <end position="344"/>
    </location>
</feature>
<feature type="transmembrane region" description="Helical; Name=5" evidence="4">
    <location>
        <begin position="345"/>
        <end position="365"/>
    </location>
</feature>
<feature type="topological domain" description="Lumenal" evidence="2">
    <location>
        <begin position="366"/>
        <end position="390"/>
    </location>
</feature>
<feature type="transmembrane region" description="Helical; Name=6" evidence="4">
    <location>
        <begin position="391"/>
        <end position="411"/>
    </location>
</feature>
<feature type="topological domain" description="Cytoplasmic" evidence="2">
    <location>
        <begin position="412"/>
        <end position="441"/>
    </location>
</feature>
<feature type="transmembrane region" description="Helical; Name=7" evidence="4">
    <location>
        <begin position="442"/>
        <end position="462"/>
    </location>
</feature>
<feature type="topological domain" description="Lumenal" evidence="2">
    <location>
        <begin position="463"/>
        <end position="482"/>
    </location>
</feature>
<feature type="transmembrane region" description="Helical; Name=8" evidence="4">
    <location>
        <begin position="483"/>
        <end position="503"/>
    </location>
</feature>
<feature type="topological domain" description="Cytoplasmic" evidence="2">
    <location>
        <begin position="504"/>
        <end position="562"/>
    </location>
</feature>
<feature type="region of interest" description="Disordered" evidence="5">
    <location>
        <begin position="539"/>
        <end position="562"/>
    </location>
</feature>
<feature type="compositionally biased region" description="Polar residues" evidence="5">
    <location>
        <begin position="541"/>
        <end position="556"/>
    </location>
</feature>
<feature type="glycosylation site" description="N-linked (GlcNAc...) asparagine" evidence="4">
    <location>
        <position position="58"/>
    </location>
</feature>
<gene>
    <name evidence="3" type="primary">wls</name>
    <name type="ORF">GG13932</name>
</gene>
<keyword id="KW-1003">Cell membrane</keyword>
<keyword id="KW-0966">Cell projection</keyword>
<keyword id="KW-0217">Developmental protein</keyword>
<keyword id="KW-0256">Endoplasmic reticulum</keyword>
<keyword id="KW-0967">Endosome</keyword>
<keyword id="KW-0325">Glycoprotein</keyword>
<keyword id="KW-0333">Golgi apparatus</keyword>
<keyword id="KW-0472">Membrane</keyword>
<keyword id="KW-0628">Postsynaptic cell membrane</keyword>
<keyword id="KW-0709">Segmentation polarity protein</keyword>
<keyword id="KW-0770">Synapse</keyword>
<keyword id="KW-0812">Transmembrane</keyword>
<keyword id="KW-1133">Transmembrane helix</keyword>
<keyword id="KW-0879">Wnt signaling pathway</keyword>
<organism>
    <name type="scientific">Drosophila erecta</name>
    <name type="common">Fruit fly</name>
    <dbReference type="NCBI Taxonomy" id="7220"/>
    <lineage>
        <taxon>Eukaryota</taxon>
        <taxon>Metazoa</taxon>
        <taxon>Ecdysozoa</taxon>
        <taxon>Arthropoda</taxon>
        <taxon>Hexapoda</taxon>
        <taxon>Insecta</taxon>
        <taxon>Pterygota</taxon>
        <taxon>Neoptera</taxon>
        <taxon>Endopterygota</taxon>
        <taxon>Diptera</taxon>
        <taxon>Brachycera</taxon>
        <taxon>Muscomorpha</taxon>
        <taxon>Ephydroidea</taxon>
        <taxon>Drosophilidae</taxon>
        <taxon>Drosophila</taxon>
        <taxon>Sophophora</taxon>
    </lineage>
</organism>
<reference evidence="7" key="1">
    <citation type="journal article" date="2007" name="Nature">
        <title>Evolution of genes and genomes on the Drosophila phylogeny.</title>
        <authorList>
            <consortium name="Drosophila 12 genomes consortium"/>
        </authorList>
    </citation>
    <scope>NUCLEOTIDE SEQUENCE [LARGE SCALE GENOMIC DNA]</scope>
    <source>
        <strain evidence="7">Tucson 14021-0224.01</strain>
    </source>
</reference>
<sequence length="562" mass="64143">MSGTILENLSGRKLSILVTTLLLCQVLCFLLGGLYAPLPAGHVTVLGSLCREDHGRQNDTGFLLYSRGAGACIPVTREEVEQDSTKMANELVHVFQMPLPRDLRDLDYSRWQQNLIGVLQVEFGYDSSSELREPPRELQLTIDMRLAYRNKGDPDNGWKLYAHGVEHRYLDCVSSHVGPTETLYSCDMIPLFELGALHHSFYLLNLRFPLDTPSQMNLQFGHMHDLTLTAIHQNGGFTQIWLLLKTVLFPFVVGIMIWFWRRVHLLQRSPALLEYMLIYLGAALTFLNLPLEYLSLVFEMPYMLLLSDIRQGIFYAMLLTFWLVFAGEHMLIQDAPNKSTIRSRYWKHLSAVVVGCISLFVFDICERGVQLRNPFYSIWAMPLAAKMAMTFIVLAGVSAAIYFLFLCYMIWKVFRNIGDKRTSLPSMSQARRLHYESLIYRFKFLMLATIVCAALTVTGFIMGQRAEGQWDWNDNVAIQPTSAFLTGVYGMWNIYIFALLILYAPSHKQWPTMHHSDETTQSNENIVASAASEEIEFSHLPSDSNPSEISSLTSFTRKVAFD</sequence>
<proteinExistence type="inferred from homology"/>
<dbReference type="EMBL" id="CH954178">
    <property type="protein sequence ID" value="EDV51384.1"/>
    <property type="status" value="ALT_SEQ"/>
    <property type="molecule type" value="Genomic_DNA"/>
</dbReference>
<dbReference type="SMR" id="B3NGS7"/>
<dbReference type="GlyCosmos" id="B3NGS7">
    <property type="glycosylation" value="1 site, No reported glycans"/>
</dbReference>
<dbReference type="GeneID" id="6543809"/>
<dbReference type="KEGG" id="der:6543809"/>
<dbReference type="CTD" id="79971"/>
<dbReference type="eggNOG" id="ENOG502QSE2">
    <property type="taxonomic scope" value="Eukaryota"/>
</dbReference>
<dbReference type="OrthoDB" id="5804250at2759"/>
<dbReference type="Proteomes" id="UP000008711">
    <property type="component" value="Unassembled WGS sequence"/>
</dbReference>
<dbReference type="GO" id="GO:0042995">
    <property type="term" value="C:cell projection"/>
    <property type="evidence" value="ECO:0007669"/>
    <property type="project" value="UniProtKB-KW"/>
</dbReference>
<dbReference type="GO" id="GO:0005789">
    <property type="term" value="C:endoplasmic reticulum membrane"/>
    <property type="evidence" value="ECO:0000250"/>
    <property type="project" value="UniProtKB"/>
</dbReference>
<dbReference type="GO" id="GO:0010008">
    <property type="term" value="C:endosome membrane"/>
    <property type="evidence" value="ECO:0000250"/>
    <property type="project" value="UniProtKB"/>
</dbReference>
<dbReference type="GO" id="GO:0000139">
    <property type="term" value="C:Golgi membrane"/>
    <property type="evidence" value="ECO:0000250"/>
    <property type="project" value="UniProtKB"/>
</dbReference>
<dbReference type="GO" id="GO:0031594">
    <property type="term" value="C:neuromuscular junction"/>
    <property type="evidence" value="ECO:0000250"/>
    <property type="project" value="UniProtKB"/>
</dbReference>
<dbReference type="GO" id="GO:0005886">
    <property type="term" value="C:plasma membrane"/>
    <property type="evidence" value="ECO:0000250"/>
    <property type="project" value="UniProtKB"/>
</dbReference>
<dbReference type="GO" id="GO:0045211">
    <property type="term" value="C:postsynaptic membrane"/>
    <property type="evidence" value="ECO:0000250"/>
    <property type="project" value="UniProtKB"/>
</dbReference>
<dbReference type="GO" id="GO:0042734">
    <property type="term" value="C:presynaptic membrane"/>
    <property type="evidence" value="ECO:0000250"/>
    <property type="project" value="UniProtKB"/>
</dbReference>
<dbReference type="GO" id="GO:0030672">
    <property type="term" value="C:synaptic vesicle membrane"/>
    <property type="evidence" value="ECO:0000250"/>
    <property type="project" value="UniProtKB"/>
</dbReference>
<dbReference type="GO" id="GO:0017147">
    <property type="term" value="F:Wnt-protein binding"/>
    <property type="evidence" value="ECO:0000250"/>
    <property type="project" value="UniProtKB"/>
</dbReference>
<dbReference type="GO" id="GO:0008587">
    <property type="term" value="P:imaginal disc-derived wing margin morphogenesis"/>
    <property type="evidence" value="ECO:0000250"/>
    <property type="project" value="UniProtKB"/>
</dbReference>
<dbReference type="GO" id="GO:0006886">
    <property type="term" value="P:intracellular protein transport"/>
    <property type="evidence" value="ECO:0007669"/>
    <property type="project" value="TreeGrafter"/>
</dbReference>
<dbReference type="GO" id="GO:0050714">
    <property type="term" value="P:positive regulation of protein secretion"/>
    <property type="evidence" value="ECO:0000250"/>
    <property type="project" value="UniProtKB"/>
</dbReference>
<dbReference type="GO" id="GO:0030177">
    <property type="term" value="P:positive regulation of Wnt signaling pathway"/>
    <property type="evidence" value="ECO:0000250"/>
    <property type="project" value="UniProtKB"/>
</dbReference>
<dbReference type="GO" id="GO:0033157">
    <property type="term" value="P:regulation of intracellular protein transport"/>
    <property type="evidence" value="ECO:0000250"/>
    <property type="project" value="UniProtKB"/>
</dbReference>
<dbReference type="GO" id="GO:0007367">
    <property type="term" value="P:segment polarity determination"/>
    <property type="evidence" value="ECO:0000250"/>
    <property type="project" value="UniProtKB"/>
</dbReference>
<dbReference type="GO" id="GO:0061355">
    <property type="term" value="P:Wnt protein secretion"/>
    <property type="evidence" value="ECO:0007669"/>
    <property type="project" value="TreeGrafter"/>
</dbReference>
<dbReference type="GO" id="GO:0016055">
    <property type="term" value="P:Wnt signaling pathway"/>
    <property type="evidence" value="ECO:0007669"/>
    <property type="project" value="UniProtKB-KW"/>
</dbReference>
<dbReference type="InterPro" id="IPR047843">
    <property type="entry name" value="WLS-like_TM"/>
</dbReference>
<dbReference type="InterPro" id="IPR053936">
    <property type="entry name" value="WLS_GOLD"/>
</dbReference>
<dbReference type="InterPro" id="IPR009551">
    <property type="entry name" value="Wntless"/>
</dbReference>
<dbReference type="PANTHER" id="PTHR13449">
    <property type="entry name" value="INTEGRAL MEMBRANE PROTEIN GPR177"/>
    <property type="match status" value="1"/>
</dbReference>
<dbReference type="PANTHER" id="PTHR13449:SF2">
    <property type="entry name" value="PROTEIN WNTLESS HOMOLOG"/>
    <property type="match status" value="1"/>
</dbReference>
<dbReference type="Pfam" id="PF06664">
    <property type="entry name" value="WLS-like_TM"/>
    <property type="match status" value="1"/>
</dbReference>
<dbReference type="Pfam" id="PF21883">
    <property type="entry name" value="WLS_GOLD"/>
    <property type="match status" value="1"/>
</dbReference>
<name>WLS_DROER</name>
<protein>
    <recommendedName>
        <fullName evidence="3">Protein wntless</fullName>
    </recommendedName>
</protein>
<accession>B3NGS7</accession>
<evidence type="ECO:0000250" key="1"/>
<evidence type="ECO:0000250" key="2">
    <source>
        <dbReference type="UniProtKB" id="Q5T9L3"/>
    </source>
</evidence>
<evidence type="ECO:0000250" key="3">
    <source>
        <dbReference type="UniProtKB" id="Q95ST2"/>
    </source>
</evidence>
<evidence type="ECO:0000255" key="4"/>
<evidence type="ECO:0000256" key="5">
    <source>
        <dbReference type="SAM" id="MobiDB-lite"/>
    </source>
</evidence>
<evidence type="ECO:0000305" key="6"/>
<evidence type="ECO:0000312" key="7">
    <source>
        <dbReference type="EMBL" id="EDV51384.1"/>
    </source>
</evidence>
<comment type="function">
    <text evidence="1">A segment polarity gene required for wingless (wg)-dependent patterning processes, acting in both wg-sending cells and wg-target cells. In non-neuronal cells wls directs wg secretion. The wls traffic loop encompasses the Golgi, the cell surface, an endocytic compartment and a retrograde route leading back to the Golgi, and involves clathrin-mediated endocytosis and the retromer complex (a conserved protein complex consisting of Vps35 and Vps26). In neuronal cells (the larval motorneuron NMJ), the wg signal moves across the synapse via the release of wls-containing exosome-like vesicles. Postsynaptic wls is required for the trafficking of fz2 through the fz2-interacting protein Grip (By similarity).</text>
</comment>
<comment type="subunit">
    <text evidence="1">Interacts with wg; in the Golgi. Interacts with Vps35, a component of the retromer complex; wls stability is regulated by Vps35 (By similarity).</text>
</comment>
<comment type="subcellular location">
    <subcellularLocation>
        <location evidence="3">Presynaptic cell membrane</location>
        <topology evidence="3">Multi-pass membrane protein</topology>
    </subcellularLocation>
    <subcellularLocation>
        <location evidence="3">Postsynaptic cell membrane</location>
        <topology evidence="3">Multi-pass membrane protein</topology>
    </subcellularLocation>
    <subcellularLocation>
        <location evidence="3">Cell membrane</location>
        <topology evidence="3">Multi-pass membrane protein</topology>
    </subcellularLocation>
    <subcellularLocation>
        <location evidence="3">Endoplasmic reticulum membrane</location>
        <topology evidence="3">Multi-pass membrane protein</topology>
    </subcellularLocation>
    <subcellularLocation>
        <location evidence="3">Endosome membrane</location>
        <topology evidence="3">Multi-pass membrane protein</topology>
    </subcellularLocation>
    <subcellularLocation>
        <location evidence="3">Golgi apparatus membrane</location>
        <topology evidence="3">Multi-pass membrane protein</topology>
    </subcellularLocation>
    <text evidence="1">In non-neuronal cells, wls binds to wg in the Golgi and accompanies it to the plasma membrane where the two proteins dissociate. Wg is secreted and wls is then internalized and returns to the Golgi apparatus in a retromer-dependent manner. Wls and wg colocalize in the Golgi apparatus in wg-producing cells, and reduced expression is seen in non-producing cells. Endoplasmic reticulum expression is unchanged in wg-producing versus non-producing cells. In neuronal cells, wls is localized both pre- and postsynaptically and is transferred trans-synaptically from the pre- to the postsynaptic compartment (By similarity).</text>
</comment>
<comment type="similarity">
    <text evidence="4">Belongs to the wntless family.</text>
</comment>
<comment type="sequence caution" evidence="6">
    <conflict type="erroneous gene model prediction">
        <sequence resource="EMBL-CDS" id="EDV51384"/>
    </conflict>
</comment>